<sequence length="545" mass="62065">MKKNGCLLLFAYSLLSFSLTAATIDETYDESLFIKSFSSRYSYVSFAFEIGASTDSTHSSVFSESSFSLFPLSIARVMDECQVSELHIRATRGRWDYENWKESPDNGFYSGGLGFEVWAFMANDPSMKYWLKLTNQLSGLLCASLNYIDSSNTYQPQLSYPGSFSFSNNTQYFASLPQEDVCTENLSPLFKLLPCKRKAGIASLLDSHLFFDTDWHSFSIDVYPSENQSLASVKMGIIIQAVVDVERNGRRKGKTTFQPPSEYCHDEDMDSLHCLMSGYSTEHHTVDDLFHKVPKERCLLSSTFSDVFVSNGDKIDTFSLDEAANIQIPIQSTSDNHTVTVDRSLSNDGNHWGSLSSTIYNPSSSPRTIVYFEKFPWFVRVYLHTLTITLNGTRINTKDFIEKLYYQPLRDRKAGTMMEIQFSIPPHTNLIVHFNVEKTPLRLDEYPPDANRGYNLPPAIISVFDENNTKLCSLRTAALLMFIPTPDFSMPYNVIIFTSTVIALTFGGIFNLLTRRFVPQQSKFQNRQPSMLQRLKEKIFHKKRG</sequence>
<dbReference type="EMBL" id="CU329671">
    <property type="protein sequence ID" value="CAA22348.1"/>
    <property type="molecule type" value="Genomic_DNA"/>
</dbReference>
<dbReference type="PIR" id="T39499">
    <property type="entry name" value="T39499"/>
</dbReference>
<dbReference type="RefSeq" id="NP_596625.1">
    <property type="nucleotide sequence ID" value="NM_001022546.2"/>
</dbReference>
<dbReference type="SMR" id="O94380"/>
<dbReference type="ComplexPortal" id="CPX-10141">
    <property type="entry name" value="GPI-anchor transamidase complex"/>
</dbReference>
<dbReference type="FunCoup" id="O94380">
    <property type="interactions" value="302"/>
</dbReference>
<dbReference type="STRING" id="284812.O94380"/>
<dbReference type="GlyCosmos" id="O94380">
    <property type="glycosylation" value="5 sites, No reported glycans"/>
</dbReference>
<dbReference type="PaxDb" id="4896-SPBC1604.15.1"/>
<dbReference type="EnsemblFungi" id="SPBC1604.15.1">
    <property type="protein sequence ID" value="SPBC1604.15.1:pep"/>
    <property type="gene ID" value="SPBC1604.15"/>
</dbReference>
<dbReference type="GeneID" id="2539759"/>
<dbReference type="KEGG" id="spo:2539759"/>
<dbReference type="PomBase" id="SPBC1604.15">
    <property type="gene designation" value="gpi16"/>
</dbReference>
<dbReference type="VEuPathDB" id="FungiDB:SPBC1604.15"/>
<dbReference type="eggNOG" id="KOG2407">
    <property type="taxonomic scope" value="Eukaryota"/>
</dbReference>
<dbReference type="HOGENOM" id="CLU_021459_2_1_1"/>
<dbReference type="InParanoid" id="O94380"/>
<dbReference type="OMA" id="NHGHYIG"/>
<dbReference type="PhylomeDB" id="O94380"/>
<dbReference type="UniPathway" id="UPA00196"/>
<dbReference type="PRO" id="PR:O94380"/>
<dbReference type="Proteomes" id="UP000002485">
    <property type="component" value="Chromosome II"/>
</dbReference>
<dbReference type="GO" id="GO:0005783">
    <property type="term" value="C:endoplasmic reticulum"/>
    <property type="evidence" value="ECO:0007005"/>
    <property type="project" value="PomBase"/>
</dbReference>
<dbReference type="GO" id="GO:0042765">
    <property type="term" value="C:GPI-anchor transamidase complex"/>
    <property type="evidence" value="ECO:0000318"/>
    <property type="project" value="GO_Central"/>
</dbReference>
<dbReference type="GO" id="GO:0016255">
    <property type="term" value="P:attachment of GPI anchor to protein"/>
    <property type="evidence" value="ECO:0000318"/>
    <property type="project" value="GO_Central"/>
</dbReference>
<dbReference type="GO" id="GO:0006506">
    <property type="term" value="P:GPI anchor biosynthetic process"/>
    <property type="evidence" value="ECO:0007669"/>
    <property type="project" value="UniProtKB-UniPathway"/>
</dbReference>
<dbReference type="InterPro" id="IPR007245">
    <property type="entry name" value="PIG-T"/>
</dbReference>
<dbReference type="PANTHER" id="PTHR12959:SF11">
    <property type="entry name" value="GPI TRANSAMIDASE COMPONENT PIG-T"/>
    <property type="match status" value="1"/>
</dbReference>
<dbReference type="PANTHER" id="PTHR12959">
    <property type="entry name" value="GPI TRANSAMIDASE COMPONENT PIG-T-RELATED"/>
    <property type="match status" value="1"/>
</dbReference>
<dbReference type="Pfam" id="PF04113">
    <property type="entry name" value="Gpi16"/>
    <property type="match status" value="1"/>
</dbReference>
<feature type="signal peptide" evidence="2">
    <location>
        <begin position="1"/>
        <end position="22"/>
    </location>
</feature>
<feature type="chain" id="PRO_0000024109" description="GPI transamidase component PIG-T homolog">
    <location>
        <begin position="23"/>
        <end position="545"/>
    </location>
</feature>
<feature type="topological domain" description="Lumenal" evidence="2">
    <location>
        <begin position="23"/>
        <end position="493"/>
    </location>
</feature>
<feature type="transmembrane region" description="Helical" evidence="2">
    <location>
        <begin position="494"/>
        <end position="514"/>
    </location>
</feature>
<feature type="topological domain" description="Cytoplasmic" evidence="2">
    <location>
        <begin position="515"/>
        <end position="545"/>
    </location>
</feature>
<feature type="glycosylation site" description="N-linked (GlcNAc...) asparagine" evidence="2">
    <location>
        <position position="168"/>
    </location>
</feature>
<feature type="glycosylation site" description="N-linked (GlcNAc...) asparagine" evidence="2">
    <location>
        <position position="227"/>
    </location>
</feature>
<feature type="glycosylation site" description="N-linked (GlcNAc...) asparagine" evidence="2">
    <location>
        <position position="336"/>
    </location>
</feature>
<feature type="glycosylation site" description="N-linked (GlcNAc...) asparagine" evidence="2">
    <location>
        <position position="391"/>
    </location>
</feature>
<feature type="glycosylation site" description="N-linked (GlcNAc...) asparagine" evidence="2">
    <location>
        <position position="467"/>
    </location>
</feature>
<feature type="disulfide bond" description="Interchain (with C-73 in PIGK/GPI8)" evidence="1">
    <location>
        <position position="182"/>
    </location>
</feature>
<comment type="function">
    <text evidence="1">Component of the GPI transamidase complex. Involved in transfer of GPI to proteins (By similarity).</text>
</comment>
<comment type="pathway">
    <text>Glycolipid biosynthesis; glycosylphosphatidylinositol-anchor biosynthesis.</text>
</comment>
<comment type="subunit">
    <text evidence="1">Forms a complex with PIG-S homolog, PIG-U homolog and GPI8.</text>
</comment>
<comment type="subcellular location">
    <subcellularLocation>
        <location evidence="3">Endoplasmic reticulum membrane</location>
        <topology evidence="3">Single-pass type I membrane protein</topology>
    </subcellularLocation>
</comment>
<comment type="PTM">
    <text evidence="1">The disulfide bond between PIGK/GPI8 and PIGT is important for normal enzyme activity.</text>
</comment>
<comment type="similarity">
    <text evidence="4">Belongs to the PIGT family.</text>
</comment>
<organism>
    <name type="scientific">Schizosaccharomyces pombe (strain 972 / ATCC 24843)</name>
    <name type="common">Fission yeast</name>
    <dbReference type="NCBI Taxonomy" id="284812"/>
    <lineage>
        <taxon>Eukaryota</taxon>
        <taxon>Fungi</taxon>
        <taxon>Dikarya</taxon>
        <taxon>Ascomycota</taxon>
        <taxon>Taphrinomycotina</taxon>
        <taxon>Schizosaccharomycetes</taxon>
        <taxon>Schizosaccharomycetales</taxon>
        <taxon>Schizosaccharomycetaceae</taxon>
        <taxon>Schizosaccharomyces</taxon>
    </lineage>
</organism>
<keyword id="KW-1015">Disulfide bond</keyword>
<keyword id="KW-0256">Endoplasmic reticulum</keyword>
<keyword id="KW-0325">Glycoprotein</keyword>
<keyword id="KW-0337">GPI-anchor biosynthesis</keyword>
<keyword id="KW-0472">Membrane</keyword>
<keyword id="KW-1185">Reference proteome</keyword>
<keyword id="KW-0732">Signal</keyword>
<keyword id="KW-0812">Transmembrane</keyword>
<keyword id="KW-1133">Transmembrane helix</keyword>
<proteinExistence type="inferred from homology"/>
<accession>O94380</accession>
<protein>
    <recommendedName>
        <fullName>GPI transamidase component PIG-T homolog</fullName>
    </recommendedName>
</protein>
<name>GPI16_SCHPO</name>
<reference key="1">
    <citation type="journal article" date="2002" name="Nature">
        <title>The genome sequence of Schizosaccharomyces pombe.</title>
        <authorList>
            <person name="Wood V."/>
            <person name="Gwilliam R."/>
            <person name="Rajandream M.A."/>
            <person name="Lyne M.H."/>
            <person name="Lyne R."/>
            <person name="Stewart A."/>
            <person name="Sgouros J.G."/>
            <person name="Peat N."/>
            <person name="Hayles J."/>
            <person name="Baker S.G."/>
            <person name="Basham D."/>
            <person name="Bowman S."/>
            <person name="Brooks K."/>
            <person name="Brown D."/>
            <person name="Brown S."/>
            <person name="Chillingworth T."/>
            <person name="Churcher C.M."/>
            <person name="Collins M."/>
            <person name="Connor R."/>
            <person name="Cronin A."/>
            <person name="Davis P."/>
            <person name="Feltwell T."/>
            <person name="Fraser A."/>
            <person name="Gentles S."/>
            <person name="Goble A."/>
            <person name="Hamlin N."/>
            <person name="Harris D.E."/>
            <person name="Hidalgo J."/>
            <person name="Hodgson G."/>
            <person name="Holroyd S."/>
            <person name="Hornsby T."/>
            <person name="Howarth S."/>
            <person name="Huckle E.J."/>
            <person name="Hunt S."/>
            <person name="Jagels K."/>
            <person name="James K.D."/>
            <person name="Jones L."/>
            <person name="Jones M."/>
            <person name="Leather S."/>
            <person name="McDonald S."/>
            <person name="McLean J."/>
            <person name="Mooney P."/>
            <person name="Moule S."/>
            <person name="Mungall K.L."/>
            <person name="Murphy L.D."/>
            <person name="Niblett D."/>
            <person name="Odell C."/>
            <person name="Oliver K."/>
            <person name="O'Neil S."/>
            <person name="Pearson D."/>
            <person name="Quail M.A."/>
            <person name="Rabbinowitsch E."/>
            <person name="Rutherford K.M."/>
            <person name="Rutter S."/>
            <person name="Saunders D."/>
            <person name="Seeger K."/>
            <person name="Sharp S."/>
            <person name="Skelton J."/>
            <person name="Simmonds M.N."/>
            <person name="Squares R."/>
            <person name="Squares S."/>
            <person name="Stevens K."/>
            <person name="Taylor K."/>
            <person name="Taylor R.G."/>
            <person name="Tivey A."/>
            <person name="Walsh S.V."/>
            <person name="Warren T."/>
            <person name="Whitehead S."/>
            <person name="Woodward J.R."/>
            <person name="Volckaert G."/>
            <person name="Aert R."/>
            <person name="Robben J."/>
            <person name="Grymonprez B."/>
            <person name="Weltjens I."/>
            <person name="Vanstreels E."/>
            <person name="Rieger M."/>
            <person name="Schaefer M."/>
            <person name="Mueller-Auer S."/>
            <person name="Gabel C."/>
            <person name="Fuchs M."/>
            <person name="Duesterhoeft A."/>
            <person name="Fritzc C."/>
            <person name="Holzer E."/>
            <person name="Moestl D."/>
            <person name="Hilbert H."/>
            <person name="Borzym K."/>
            <person name="Langer I."/>
            <person name="Beck A."/>
            <person name="Lehrach H."/>
            <person name="Reinhardt R."/>
            <person name="Pohl T.M."/>
            <person name="Eger P."/>
            <person name="Zimmermann W."/>
            <person name="Wedler H."/>
            <person name="Wambutt R."/>
            <person name="Purnelle B."/>
            <person name="Goffeau A."/>
            <person name="Cadieu E."/>
            <person name="Dreano S."/>
            <person name="Gloux S."/>
            <person name="Lelaure V."/>
            <person name="Mottier S."/>
            <person name="Galibert F."/>
            <person name="Aves S.J."/>
            <person name="Xiang Z."/>
            <person name="Hunt C."/>
            <person name="Moore K."/>
            <person name="Hurst S.M."/>
            <person name="Lucas M."/>
            <person name="Rochet M."/>
            <person name="Gaillardin C."/>
            <person name="Tallada V.A."/>
            <person name="Garzon A."/>
            <person name="Thode G."/>
            <person name="Daga R.R."/>
            <person name="Cruzado L."/>
            <person name="Jimenez J."/>
            <person name="Sanchez M."/>
            <person name="del Rey F."/>
            <person name="Benito J."/>
            <person name="Dominguez A."/>
            <person name="Revuelta J.L."/>
            <person name="Moreno S."/>
            <person name="Armstrong J."/>
            <person name="Forsburg S.L."/>
            <person name="Cerutti L."/>
            <person name="Lowe T."/>
            <person name="McCombie W.R."/>
            <person name="Paulsen I."/>
            <person name="Potashkin J."/>
            <person name="Shpakovski G.V."/>
            <person name="Ussery D."/>
            <person name="Barrell B.G."/>
            <person name="Nurse P."/>
        </authorList>
    </citation>
    <scope>NUCLEOTIDE SEQUENCE [LARGE SCALE GENOMIC DNA]</scope>
    <source>
        <strain>972 / ATCC 24843</strain>
    </source>
</reference>
<reference key="2">
    <citation type="journal article" date="2006" name="Nat. Biotechnol.">
        <title>ORFeome cloning and global analysis of protein localization in the fission yeast Schizosaccharomyces pombe.</title>
        <authorList>
            <person name="Matsuyama A."/>
            <person name="Arai R."/>
            <person name="Yashiroda Y."/>
            <person name="Shirai A."/>
            <person name="Kamata A."/>
            <person name="Sekido S."/>
            <person name="Kobayashi Y."/>
            <person name="Hashimoto A."/>
            <person name="Hamamoto M."/>
            <person name="Hiraoka Y."/>
            <person name="Horinouchi S."/>
            <person name="Yoshida M."/>
        </authorList>
    </citation>
    <scope>SUBCELLULAR LOCATION [LARGE SCALE ANALYSIS]</scope>
</reference>
<gene>
    <name type="primary">gpi16</name>
    <name type="ORF">SPBC1604.15</name>
</gene>
<evidence type="ECO:0000250" key="1"/>
<evidence type="ECO:0000255" key="2"/>
<evidence type="ECO:0000269" key="3">
    <source>
    </source>
</evidence>
<evidence type="ECO:0000305" key="4"/>